<protein>
    <recommendedName>
        <fullName evidence="1">6,7-dimethyl-8-ribityllumazine synthase</fullName>
        <shortName evidence="1">DMRL synthase</shortName>
        <shortName evidence="1">LS</shortName>
        <shortName evidence="1">Lumazine synthase</shortName>
        <ecNumber evidence="1">2.5.1.78</ecNumber>
    </recommendedName>
</protein>
<accession>A3D7C5</accession>
<evidence type="ECO:0000255" key="1">
    <source>
        <dbReference type="HAMAP-Rule" id="MF_00178"/>
    </source>
</evidence>
<comment type="function">
    <text evidence="1">Catalyzes the formation of 6,7-dimethyl-8-ribityllumazine by condensation of 5-amino-6-(D-ribitylamino)uracil with 3,4-dihydroxy-2-butanone 4-phosphate. This is the penultimate step in the biosynthesis of riboflavin.</text>
</comment>
<comment type="catalytic activity">
    <reaction evidence="1">
        <text>(2S)-2-hydroxy-3-oxobutyl phosphate + 5-amino-6-(D-ribitylamino)uracil = 6,7-dimethyl-8-(1-D-ribityl)lumazine + phosphate + 2 H2O + H(+)</text>
        <dbReference type="Rhea" id="RHEA:26152"/>
        <dbReference type="ChEBI" id="CHEBI:15377"/>
        <dbReference type="ChEBI" id="CHEBI:15378"/>
        <dbReference type="ChEBI" id="CHEBI:15934"/>
        <dbReference type="ChEBI" id="CHEBI:43474"/>
        <dbReference type="ChEBI" id="CHEBI:58201"/>
        <dbReference type="ChEBI" id="CHEBI:58830"/>
        <dbReference type="EC" id="2.5.1.78"/>
    </reaction>
</comment>
<comment type="pathway">
    <text evidence="1">Cofactor biosynthesis; riboflavin biosynthesis; riboflavin from 2-hydroxy-3-oxobutyl phosphate and 5-amino-6-(D-ribitylamino)uracil: step 1/2.</text>
</comment>
<comment type="subunit">
    <text evidence="1">Forms an icosahedral capsid composed of 60 subunits, arranged as a dodecamer of pentamers.</text>
</comment>
<comment type="similarity">
    <text evidence="1">Belongs to the DMRL synthase family.</text>
</comment>
<keyword id="KW-1185">Reference proteome</keyword>
<keyword id="KW-0686">Riboflavin biosynthesis</keyword>
<keyword id="KW-0808">Transferase</keyword>
<proteinExistence type="inferred from homology"/>
<feature type="chain" id="PRO_1000040507" description="6,7-dimethyl-8-ribityllumazine synthase">
    <location>
        <begin position="1"/>
        <end position="159"/>
    </location>
</feature>
<feature type="active site" description="Proton donor" evidence="1">
    <location>
        <position position="89"/>
    </location>
</feature>
<feature type="binding site" evidence="1">
    <location>
        <position position="22"/>
    </location>
    <ligand>
        <name>5-amino-6-(D-ribitylamino)uracil</name>
        <dbReference type="ChEBI" id="CHEBI:15934"/>
    </ligand>
</feature>
<feature type="binding site" evidence="1">
    <location>
        <begin position="57"/>
        <end position="59"/>
    </location>
    <ligand>
        <name>5-amino-6-(D-ribitylamino)uracil</name>
        <dbReference type="ChEBI" id="CHEBI:15934"/>
    </ligand>
</feature>
<feature type="binding site" evidence="1">
    <location>
        <begin position="81"/>
        <end position="83"/>
    </location>
    <ligand>
        <name>5-amino-6-(D-ribitylamino)uracil</name>
        <dbReference type="ChEBI" id="CHEBI:15934"/>
    </ligand>
</feature>
<feature type="binding site" evidence="1">
    <location>
        <begin position="86"/>
        <end position="87"/>
    </location>
    <ligand>
        <name>(2S)-2-hydroxy-3-oxobutyl phosphate</name>
        <dbReference type="ChEBI" id="CHEBI:58830"/>
    </ligand>
</feature>
<feature type="binding site" evidence="1">
    <location>
        <position position="114"/>
    </location>
    <ligand>
        <name>5-amino-6-(D-ribitylamino)uracil</name>
        <dbReference type="ChEBI" id="CHEBI:15934"/>
    </ligand>
</feature>
<feature type="binding site" evidence="1">
    <location>
        <position position="128"/>
    </location>
    <ligand>
        <name>(2S)-2-hydroxy-3-oxobutyl phosphate</name>
        <dbReference type="ChEBI" id="CHEBI:58830"/>
    </ligand>
</feature>
<gene>
    <name evidence="1" type="primary">ribH</name>
    <name type="ordered locus">Sbal_3157</name>
</gene>
<organism>
    <name type="scientific">Shewanella baltica (strain OS155 / ATCC BAA-1091)</name>
    <dbReference type="NCBI Taxonomy" id="325240"/>
    <lineage>
        <taxon>Bacteria</taxon>
        <taxon>Pseudomonadati</taxon>
        <taxon>Pseudomonadota</taxon>
        <taxon>Gammaproteobacteria</taxon>
        <taxon>Alteromonadales</taxon>
        <taxon>Shewanellaceae</taxon>
        <taxon>Shewanella</taxon>
    </lineage>
</organism>
<name>RISB_SHEB5</name>
<reference key="1">
    <citation type="submission" date="2007-02" db="EMBL/GenBank/DDBJ databases">
        <title>Complete sequence of chromosome of Shewanella baltica OS155.</title>
        <authorList>
            <consortium name="US DOE Joint Genome Institute"/>
            <person name="Copeland A."/>
            <person name="Lucas S."/>
            <person name="Lapidus A."/>
            <person name="Barry K."/>
            <person name="Detter J.C."/>
            <person name="Glavina del Rio T."/>
            <person name="Hammon N."/>
            <person name="Israni S."/>
            <person name="Dalin E."/>
            <person name="Tice H."/>
            <person name="Pitluck S."/>
            <person name="Sims D.R."/>
            <person name="Brettin T."/>
            <person name="Bruce D."/>
            <person name="Han C."/>
            <person name="Tapia R."/>
            <person name="Brainard J."/>
            <person name="Schmutz J."/>
            <person name="Larimer F."/>
            <person name="Land M."/>
            <person name="Hauser L."/>
            <person name="Kyrpides N."/>
            <person name="Mikhailova N."/>
            <person name="Brettar I."/>
            <person name="Klappenbach J."/>
            <person name="Konstantinidis K."/>
            <person name="Rodrigues J."/>
            <person name="Tiedje J."/>
            <person name="Richardson P."/>
        </authorList>
    </citation>
    <scope>NUCLEOTIDE SEQUENCE [LARGE SCALE GENOMIC DNA]</scope>
    <source>
        <strain>OS155 / ATCC BAA-1091</strain>
    </source>
</reference>
<dbReference type="EC" id="2.5.1.78" evidence="1"/>
<dbReference type="EMBL" id="CP000563">
    <property type="protein sequence ID" value="ABN62638.1"/>
    <property type="molecule type" value="Genomic_DNA"/>
</dbReference>
<dbReference type="SMR" id="A3D7C5"/>
<dbReference type="STRING" id="325240.Sbal_3157"/>
<dbReference type="KEGG" id="sbl:Sbal_3157"/>
<dbReference type="HOGENOM" id="CLU_089358_1_1_6"/>
<dbReference type="OrthoDB" id="9809709at2"/>
<dbReference type="UniPathway" id="UPA00275">
    <property type="reaction ID" value="UER00404"/>
</dbReference>
<dbReference type="Proteomes" id="UP000001557">
    <property type="component" value="Chromosome"/>
</dbReference>
<dbReference type="GO" id="GO:0005829">
    <property type="term" value="C:cytosol"/>
    <property type="evidence" value="ECO:0007669"/>
    <property type="project" value="TreeGrafter"/>
</dbReference>
<dbReference type="GO" id="GO:0009349">
    <property type="term" value="C:riboflavin synthase complex"/>
    <property type="evidence" value="ECO:0007669"/>
    <property type="project" value="InterPro"/>
</dbReference>
<dbReference type="GO" id="GO:0000906">
    <property type="term" value="F:6,7-dimethyl-8-ribityllumazine synthase activity"/>
    <property type="evidence" value="ECO:0007669"/>
    <property type="project" value="UniProtKB-UniRule"/>
</dbReference>
<dbReference type="GO" id="GO:0009231">
    <property type="term" value="P:riboflavin biosynthetic process"/>
    <property type="evidence" value="ECO:0007669"/>
    <property type="project" value="UniProtKB-UniRule"/>
</dbReference>
<dbReference type="CDD" id="cd09209">
    <property type="entry name" value="Lumazine_synthase-I"/>
    <property type="match status" value="1"/>
</dbReference>
<dbReference type="FunFam" id="3.40.50.960:FF:000001">
    <property type="entry name" value="6,7-dimethyl-8-ribityllumazine synthase"/>
    <property type="match status" value="1"/>
</dbReference>
<dbReference type="Gene3D" id="3.40.50.960">
    <property type="entry name" value="Lumazine/riboflavin synthase"/>
    <property type="match status" value="1"/>
</dbReference>
<dbReference type="HAMAP" id="MF_00178">
    <property type="entry name" value="Lumazine_synth"/>
    <property type="match status" value="1"/>
</dbReference>
<dbReference type="InterPro" id="IPR034964">
    <property type="entry name" value="LS"/>
</dbReference>
<dbReference type="InterPro" id="IPR002180">
    <property type="entry name" value="LS/RS"/>
</dbReference>
<dbReference type="InterPro" id="IPR036467">
    <property type="entry name" value="LS/RS_sf"/>
</dbReference>
<dbReference type="NCBIfam" id="TIGR00114">
    <property type="entry name" value="lumazine-synth"/>
    <property type="match status" value="1"/>
</dbReference>
<dbReference type="NCBIfam" id="NF000812">
    <property type="entry name" value="PRK00061.1-4"/>
    <property type="match status" value="1"/>
</dbReference>
<dbReference type="PANTHER" id="PTHR21058:SF0">
    <property type="entry name" value="6,7-DIMETHYL-8-RIBITYLLUMAZINE SYNTHASE"/>
    <property type="match status" value="1"/>
</dbReference>
<dbReference type="PANTHER" id="PTHR21058">
    <property type="entry name" value="6,7-DIMETHYL-8-RIBITYLLUMAZINE SYNTHASE DMRL SYNTHASE LUMAZINE SYNTHASE"/>
    <property type="match status" value="1"/>
</dbReference>
<dbReference type="Pfam" id="PF00885">
    <property type="entry name" value="DMRL_synthase"/>
    <property type="match status" value="1"/>
</dbReference>
<dbReference type="SUPFAM" id="SSF52121">
    <property type="entry name" value="Lumazine synthase"/>
    <property type="match status" value="1"/>
</dbReference>
<sequence length="159" mass="16775">MNVVQGNIEAKNAKVAIVISRFNSFLVESLLEGALDTLKRFGQVSDDNITVVRVPGAVELPLAARRVAASGKFDGIIALGAVIRGGTPHFDFVAGECNKGLAQVALEFDLPVAFGVLTTDTIEQAIERSGTKAGNKGGEAALSLLEMVNVLQELEQQLL</sequence>